<name>NADA_PYRFU</name>
<sequence>MEKVEELKKEIERLKKERNAIILAHNYQLPEVQDVADFVGDSLELARKATKVDADVIVFAGVDFMAETAKILNPDKIVLIPNKRATCAMANMLKVKHILEAKKKYPNAPVVLYVNSTAETKAYADVTVTSANAVDIIRKLDSDVIIFGPDKNLAHYVAKVTGKTIIPIPPEGHCYVHKKFTIEDVERAKKLHPNAKLMVHPECNPEVQEHADIIVSTGGMIRRACEWDEWVVFTEREMVYRLSKLYPNKKFYPAKEDAVCVGMKAITLQHVYESLRDMKYEVTVPEEIAEKARKAIERMLEMS</sequence>
<reference key="1">
    <citation type="journal article" date="1999" name="Genetics">
        <title>Divergence of the hyperthermophilic archaea Pyrococcus furiosus and P. horikoshii inferred from complete genomic sequences.</title>
        <authorList>
            <person name="Maeder D.L."/>
            <person name="Weiss R.B."/>
            <person name="Dunn D.M."/>
            <person name="Cherry J.L."/>
            <person name="Gonzalez J.M."/>
            <person name="DiRuggiero J."/>
            <person name="Robb F.T."/>
        </authorList>
    </citation>
    <scope>NUCLEOTIDE SEQUENCE [LARGE SCALE GENOMIC DNA]</scope>
    <source>
        <strain>ATCC 43587 / DSM 3638 / JCM 8422 / Vc1</strain>
    </source>
</reference>
<reference evidence="4" key="2">
    <citation type="journal article" date="2013" name="Acta Crystallogr. D">
        <title>Active-site models for complexes of quinolinate synthase with substrates and intermediates.</title>
        <authorList>
            <person name="Soriano E.V."/>
            <person name="Zhang Y."/>
            <person name="Colabroy K.L."/>
            <person name="Sanders J.M."/>
            <person name="Settembre E.C."/>
            <person name="Dorrestein P.C."/>
            <person name="Begley T.P."/>
            <person name="Ealick S.E."/>
        </authorList>
    </citation>
    <scope>X-RAY CRYSTALLOGRAPHY (2.80 ANGSTROMS)</scope>
    <scope>FUNCTION</scope>
    <scope>CATALYTIC ACTIVITY</scope>
    <scope>COFACTOR</scope>
    <scope>PATHWAY</scope>
    <scope>SUBUNIT</scope>
</reference>
<keyword id="KW-0002">3D-structure</keyword>
<keyword id="KW-0004">4Fe-4S</keyword>
<keyword id="KW-0963">Cytoplasm</keyword>
<keyword id="KW-0408">Iron</keyword>
<keyword id="KW-0411">Iron-sulfur</keyword>
<keyword id="KW-0479">Metal-binding</keyword>
<keyword id="KW-0662">Pyridine nucleotide biosynthesis</keyword>
<keyword id="KW-1185">Reference proteome</keyword>
<keyword id="KW-0808">Transferase</keyword>
<organism>
    <name type="scientific">Pyrococcus furiosus (strain ATCC 43587 / DSM 3638 / JCM 8422 / Vc1)</name>
    <dbReference type="NCBI Taxonomy" id="186497"/>
    <lineage>
        <taxon>Archaea</taxon>
        <taxon>Methanobacteriati</taxon>
        <taxon>Methanobacteriota</taxon>
        <taxon>Thermococci</taxon>
        <taxon>Thermococcales</taxon>
        <taxon>Thermococcaceae</taxon>
        <taxon>Pyrococcus</taxon>
    </lineage>
</organism>
<feature type="chain" id="PRO_0000155809" description="Quinolinate synthase">
    <location>
        <begin position="1"/>
        <end position="303"/>
    </location>
</feature>
<feature type="binding site" evidence="1">
    <location>
        <position position="25"/>
    </location>
    <ligand>
        <name>iminosuccinate</name>
        <dbReference type="ChEBI" id="CHEBI:77875"/>
    </ligand>
</feature>
<feature type="binding site" evidence="1">
    <location>
        <position position="42"/>
    </location>
    <ligand>
        <name>iminosuccinate</name>
        <dbReference type="ChEBI" id="CHEBI:77875"/>
    </ligand>
</feature>
<feature type="binding site" evidence="1">
    <location>
        <position position="87"/>
    </location>
    <ligand>
        <name>[4Fe-4S] cluster</name>
        <dbReference type="ChEBI" id="CHEBI:49883"/>
    </ligand>
</feature>
<feature type="binding site" evidence="1">
    <location>
        <begin position="113"/>
        <end position="115"/>
    </location>
    <ligand>
        <name>iminosuccinate</name>
        <dbReference type="ChEBI" id="CHEBI:77875"/>
    </ligand>
</feature>
<feature type="binding site" evidence="1">
    <location>
        <position position="130"/>
    </location>
    <ligand>
        <name>iminosuccinate</name>
        <dbReference type="ChEBI" id="CHEBI:77875"/>
    </ligand>
</feature>
<feature type="binding site" evidence="1">
    <location>
        <position position="174"/>
    </location>
    <ligand>
        <name>[4Fe-4S] cluster</name>
        <dbReference type="ChEBI" id="CHEBI:49883"/>
    </ligand>
</feature>
<feature type="binding site" evidence="1">
    <location>
        <begin position="200"/>
        <end position="202"/>
    </location>
    <ligand>
        <name>iminosuccinate</name>
        <dbReference type="ChEBI" id="CHEBI:77875"/>
    </ligand>
</feature>
<feature type="binding site" evidence="1">
    <location>
        <position position="217"/>
    </location>
    <ligand>
        <name>iminosuccinate</name>
        <dbReference type="ChEBI" id="CHEBI:77875"/>
    </ligand>
</feature>
<feature type="binding site" evidence="1">
    <location>
        <position position="260"/>
    </location>
    <ligand>
        <name>[4Fe-4S] cluster</name>
        <dbReference type="ChEBI" id="CHEBI:49883"/>
    </ligand>
</feature>
<feature type="helix" evidence="5">
    <location>
        <begin position="2"/>
        <end position="18"/>
    </location>
</feature>
<feature type="strand" evidence="5">
    <location>
        <begin position="20"/>
        <end position="25"/>
    </location>
</feature>
<feature type="helix" evidence="5">
    <location>
        <begin position="30"/>
        <end position="35"/>
    </location>
</feature>
<feature type="strand" evidence="5">
    <location>
        <begin position="37"/>
        <end position="40"/>
    </location>
</feature>
<feature type="helix" evidence="5">
    <location>
        <begin position="42"/>
        <end position="48"/>
    </location>
</feature>
<feature type="strand" evidence="5">
    <location>
        <begin position="54"/>
        <end position="61"/>
    </location>
</feature>
<feature type="helix" evidence="5">
    <location>
        <begin position="63"/>
        <end position="72"/>
    </location>
</feature>
<feature type="strand" evidence="5">
    <location>
        <begin position="76"/>
        <end position="79"/>
    </location>
</feature>
<feature type="helix" evidence="5">
    <location>
        <begin position="95"/>
        <end position="104"/>
    </location>
</feature>
<feature type="strand" evidence="5">
    <location>
        <begin position="110"/>
        <end position="116"/>
    </location>
</feature>
<feature type="helix" evidence="5">
    <location>
        <begin position="118"/>
        <end position="121"/>
    </location>
</feature>
<feature type="strand" evidence="5">
    <location>
        <begin position="125"/>
        <end position="128"/>
    </location>
</feature>
<feature type="turn" evidence="5">
    <location>
        <begin position="130"/>
        <end position="132"/>
    </location>
</feature>
<feature type="helix" evidence="5">
    <location>
        <begin position="133"/>
        <end position="139"/>
    </location>
</feature>
<feature type="strand" evidence="5">
    <location>
        <begin position="143"/>
        <end position="149"/>
    </location>
</feature>
<feature type="helix" evidence="5">
    <location>
        <begin position="151"/>
        <end position="161"/>
    </location>
</feature>
<feature type="strand" evidence="5">
    <location>
        <begin position="164"/>
        <end position="169"/>
    </location>
</feature>
<feature type="strand" evidence="5">
    <location>
        <begin position="171"/>
        <end position="173"/>
    </location>
</feature>
<feature type="helix" evidence="5">
    <location>
        <begin position="177"/>
        <end position="179"/>
    </location>
</feature>
<feature type="helix" evidence="5">
    <location>
        <begin position="182"/>
        <end position="190"/>
    </location>
</feature>
<feature type="strand" evidence="5">
    <location>
        <begin position="197"/>
        <end position="199"/>
    </location>
</feature>
<feature type="helix" evidence="5">
    <location>
        <begin position="205"/>
        <end position="209"/>
    </location>
</feature>
<feature type="strand" evidence="5">
    <location>
        <begin position="212"/>
        <end position="214"/>
    </location>
</feature>
<feature type="helix" evidence="5">
    <location>
        <begin position="217"/>
        <end position="220"/>
    </location>
</feature>
<feature type="strand" evidence="5">
    <location>
        <begin position="226"/>
        <end position="229"/>
    </location>
</feature>
<feature type="strand" evidence="5">
    <location>
        <begin position="231"/>
        <end position="234"/>
    </location>
</feature>
<feature type="helix" evidence="5">
    <location>
        <begin position="237"/>
        <end position="245"/>
    </location>
</feature>
<feature type="strand" evidence="5">
    <location>
        <begin position="252"/>
        <end position="255"/>
    </location>
</feature>
<feature type="strand" evidence="5">
    <location>
        <begin position="257"/>
        <end position="260"/>
    </location>
</feature>
<feature type="helix" evidence="5">
    <location>
        <begin position="268"/>
        <end position="277"/>
    </location>
</feature>
<feature type="helix" evidence="5">
    <location>
        <begin position="286"/>
        <end position="302"/>
    </location>
</feature>
<protein>
    <recommendedName>
        <fullName evidence="1 3">Quinolinate synthase</fullName>
        <shortName evidence="3">QS</shortName>
        <ecNumber evidence="1 2">2.5.1.72</ecNumber>
    </recommendedName>
</protein>
<dbReference type="EC" id="2.5.1.72" evidence="1 2"/>
<dbReference type="EMBL" id="AE009950">
    <property type="protein sequence ID" value="AAL82101.1"/>
    <property type="molecule type" value="Genomic_DNA"/>
</dbReference>
<dbReference type="RefSeq" id="WP_011013119.1">
    <property type="nucleotide sequence ID" value="NZ_CP023154.1"/>
</dbReference>
<dbReference type="PDB" id="4HHE">
    <property type="method" value="X-ray"/>
    <property type="resolution" value="2.80 A"/>
    <property type="chains" value="A=1-303"/>
</dbReference>
<dbReference type="PDBsum" id="4HHE"/>
<dbReference type="SMR" id="Q8TZL3"/>
<dbReference type="STRING" id="186497.PF1977"/>
<dbReference type="PaxDb" id="186497-PF1977"/>
<dbReference type="GeneID" id="41713799"/>
<dbReference type="KEGG" id="pfu:PF1977"/>
<dbReference type="PATRIC" id="fig|186497.12.peg.2050"/>
<dbReference type="eggNOG" id="arCOG04459">
    <property type="taxonomic scope" value="Archaea"/>
</dbReference>
<dbReference type="HOGENOM" id="CLU_047382_0_0_2"/>
<dbReference type="OrthoDB" id="5931at2157"/>
<dbReference type="PhylomeDB" id="Q8TZL3"/>
<dbReference type="BRENDA" id="2.5.1.72">
    <property type="organism ID" value="5243"/>
</dbReference>
<dbReference type="UniPathway" id="UPA00253">
    <property type="reaction ID" value="UER00327"/>
</dbReference>
<dbReference type="EvolutionaryTrace" id="Q8TZL3"/>
<dbReference type="Proteomes" id="UP000001013">
    <property type="component" value="Chromosome"/>
</dbReference>
<dbReference type="GO" id="GO:0005737">
    <property type="term" value="C:cytoplasm"/>
    <property type="evidence" value="ECO:0007669"/>
    <property type="project" value="UniProtKB-SubCell"/>
</dbReference>
<dbReference type="GO" id="GO:0051539">
    <property type="term" value="F:4 iron, 4 sulfur cluster binding"/>
    <property type="evidence" value="ECO:0007669"/>
    <property type="project" value="UniProtKB-KW"/>
</dbReference>
<dbReference type="GO" id="GO:0046872">
    <property type="term" value="F:metal ion binding"/>
    <property type="evidence" value="ECO:0007669"/>
    <property type="project" value="UniProtKB-KW"/>
</dbReference>
<dbReference type="GO" id="GO:0008987">
    <property type="term" value="F:quinolinate synthetase A activity"/>
    <property type="evidence" value="ECO:0007669"/>
    <property type="project" value="UniProtKB-UniRule"/>
</dbReference>
<dbReference type="GO" id="GO:0034628">
    <property type="term" value="P:'de novo' NAD biosynthetic process from L-aspartate"/>
    <property type="evidence" value="ECO:0007669"/>
    <property type="project" value="TreeGrafter"/>
</dbReference>
<dbReference type="FunFam" id="3.40.50.10800:FF:000002">
    <property type="entry name" value="Quinolinate synthase A"/>
    <property type="match status" value="1"/>
</dbReference>
<dbReference type="Gene3D" id="3.40.50.10800">
    <property type="entry name" value="NadA-like"/>
    <property type="match status" value="3"/>
</dbReference>
<dbReference type="HAMAP" id="MF_00568">
    <property type="entry name" value="NadA_type2"/>
    <property type="match status" value="1"/>
</dbReference>
<dbReference type="InterPro" id="IPR003473">
    <property type="entry name" value="NadA"/>
</dbReference>
<dbReference type="InterPro" id="IPR036094">
    <property type="entry name" value="NadA_sf"/>
</dbReference>
<dbReference type="InterPro" id="IPR023066">
    <property type="entry name" value="Quinolinate_synth_type2"/>
</dbReference>
<dbReference type="NCBIfam" id="TIGR00550">
    <property type="entry name" value="nadA"/>
    <property type="match status" value="1"/>
</dbReference>
<dbReference type="NCBIfam" id="NF006878">
    <property type="entry name" value="PRK09375.1-2"/>
    <property type="match status" value="1"/>
</dbReference>
<dbReference type="PANTHER" id="PTHR30573:SF0">
    <property type="entry name" value="QUINOLINATE SYNTHASE, CHLOROPLASTIC"/>
    <property type="match status" value="1"/>
</dbReference>
<dbReference type="PANTHER" id="PTHR30573">
    <property type="entry name" value="QUINOLINATE SYNTHETASE A"/>
    <property type="match status" value="1"/>
</dbReference>
<dbReference type="Pfam" id="PF02445">
    <property type="entry name" value="NadA"/>
    <property type="match status" value="1"/>
</dbReference>
<dbReference type="SUPFAM" id="SSF142754">
    <property type="entry name" value="NadA-like"/>
    <property type="match status" value="1"/>
</dbReference>
<comment type="function">
    <text evidence="1 2">Catalyzes the condensation of iminoaspartate with dihydroxyacetone phosphate to form quinolinate.</text>
</comment>
<comment type="catalytic activity">
    <reaction evidence="1 2">
        <text>iminosuccinate + dihydroxyacetone phosphate = quinolinate + phosphate + 2 H2O + H(+)</text>
        <dbReference type="Rhea" id="RHEA:25888"/>
        <dbReference type="ChEBI" id="CHEBI:15377"/>
        <dbReference type="ChEBI" id="CHEBI:15378"/>
        <dbReference type="ChEBI" id="CHEBI:29959"/>
        <dbReference type="ChEBI" id="CHEBI:43474"/>
        <dbReference type="ChEBI" id="CHEBI:57642"/>
        <dbReference type="ChEBI" id="CHEBI:77875"/>
        <dbReference type="EC" id="2.5.1.72"/>
    </reaction>
    <physiologicalReaction direction="left-to-right" evidence="1 2">
        <dbReference type="Rhea" id="RHEA:25889"/>
    </physiologicalReaction>
</comment>
<comment type="cofactor">
    <cofactor evidence="1 2">
        <name>[4Fe-4S] cluster</name>
        <dbReference type="ChEBI" id="CHEBI:49883"/>
    </cofactor>
    <text evidence="1">Binds 1 [4Fe-4S] cluster per subunit.</text>
</comment>
<comment type="pathway">
    <text evidence="1 2">Cofactor biosynthesis; NAD(+) biosynthesis; quinolinate from iminoaspartate: step 1/1.</text>
</comment>
<comment type="subunit">
    <text evidence="2">Homodimer.</text>
</comment>
<comment type="subcellular location">
    <subcellularLocation>
        <location evidence="1">Cytoplasm</location>
    </subcellularLocation>
</comment>
<comment type="similarity">
    <text evidence="1">Belongs to the quinolinate synthase family. Type 2 subfamily.</text>
</comment>
<evidence type="ECO:0000255" key="1">
    <source>
        <dbReference type="HAMAP-Rule" id="MF_00568"/>
    </source>
</evidence>
<evidence type="ECO:0000269" key="2">
    <source>
    </source>
</evidence>
<evidence type="ECO:0000303" key="3">
    <source>
    </source>
</evidence>
<evidence type="ECO:0007744" key="4">
    <source>
        <dbReference type="PDB" id="4HHE"/>
    </source>
</evidence>
<evidence type="ECO:0007829" key="5">
    <source>
        <dbReference type="PDB" id="4HHE"/>
    </source>
</evidence>
<proteinExistence type="evidence at protein level"/>
<gene>
    <name evidence="1 3" type="primary">nadA</name>
    <name type="ordered locus">PF1977</name>
</gene>
<accession>Q8TZL3</accession>